<comment type="function">
    <text evidence="1">With S4 and S12 plays an important role in translational accuracy.</text>
</comment>
<comment type="function">
    <text evidence="1">Located at the back of the 30S subunit body where it stabilizes the conformation of the head with respect to the body.</text>
</comment>
<comment type="subunit">
    <text evidence="1">Part of the 30S ribosomal subunit. Contacts proteins S4 and S8.</text>
</comment>
<comment type="domain">
    <text>The N-terminal domain interacts with the head of the 30S subunit; the C-terminal domain interacts with the body and contacts protein S4. The interaction surface between S4 and S5 is involved in control of translational fidelity.</text>
</comment>
<comment type="similarity">
    <text evidence="1">Belongs to the universal ribosomal protein uS5 family.</text>
</comment>
<sequence length="180" mass="19182">MAEERAPRGRDRDRNREEKVDDGMIEKLVAVNRVSKTVKGGRQFTFTALTVVGDGLGKVGFGYGKAREVPVAIQKSMEQARKNLATVDLNNGTLWHAVKSGHGAARVYMQPASEGTGVIAGGAMRAVLEAVGVKNVLAKAVGSRNPINLVRATLKGLSEVQSPARVAAKRGKKVEELNHG</sequence>
<protein>
    <recommendedName>
        <fullName evidence="1">Small ribosomal subunit protein uS5</fullName>
    </recommendedName>
    <alternativeName>
        <fullName evidence="2">30S ribosomal protein S5</fullName>
    </alternativeName>
</protein>
<name>RS5_XANAC</name>
<proteinExistence type="inferred from homology"/>
<dbReference type="EMBL" id="AE008923">
    <property type="protein sequence ID" value="AAM35872.1"/>
    <property type="molecule type" value="Genomic_DNA"/>
</dbReference>
<dbReference type="RefSeq" id="WP_003486682.1">
    <property type="nucleotide sequence ID" value="NC_003919.1"/>
</dbReference>
<dbReference type="SMR" id="P66586"/>
<dbReference type="GeneID" id="97509353"/>
<dbReference type="KEGG" id="xac:XAC0989"/>
<dbReference type="eggNOG" id="COG0098">
    <property type="taxonomic scope" value="Bacteria"/>
</dbReference>
<dbReference type="HOGENOM" id="CLU_065898_2_2_6"/>
<dbReference type="Proteomes" id="UP000000576">
    <property type="component" value="Chromosome"/>
</dbReference>
<dbReference type="GO" id="GO:0015935">
    <property type="term" value="C:small ribosomal subunit"/>
    <property type="evidence" value="ECO:0007669"/>
    <property type="project" value="InterPro"/>
</dbReference>
<dbReference type="GO" id="GO:0019843">
    <property type="term" value="F:rRNA binding"/>
    <property type="evidence" value="ECO:0007669"/>
    <property type="project" value="UniProtKB-UniRule"/>
</dbReference>
<dbReference type="GO" id="GO:0003735">
    <property type="term" value="F:structural constituent of ribosome"/>
    <property type="evidence" value="ECO:0007669"/>
    <property type="project" value="InterPro"/>
</dbReference>
<dbReference type="GO" id="GO:0006412">
    <property type="term" value="P:translation"/>
    <property type="evidence" value="ECO:0007669"/>
    <property type="project" value="UniProtKB-UniRule"/>
</dbReference>
<dbReference type="FunFam" id="3.30.160.20:FF:000001">
    <property type="entry name" value="30S ribosomal protein S5"/>
    <property type="match status" value="1"/>
</dbReference>
<dbReference type="FunFam" id="3.30.230.10:FF:000002">
    <property type="entry name" value="30S ribosomal protein S5"/>
    <property type="match status" value="1"/>
</dbReference>
<dbReference type="Gene3D" id="3.30.160.20">
    <property type="match status" value="1"/>
</dbReference>
<dbReference type="Gene3D" id="3.30.230.10">
    <property type="match status" value="1"/>
</dbReference>
<dbReference type="HAMAP" id="MF_01307_B">
    <property type="entry name" value="Ribosomal_uS5_B"/>
    <property type="match status" value="1"/>
</dbReference>
<dbReference type="InterPro" id="IPR020568">
    <property type="entry name" value="Ribosomal_Su5_D2-typ_SF"/>
</dbReference>
<dbReference type="InterPro" id="IPR000851">
    <property type="entry name" value="Ribosomal_uS5"/>
</dbReference>
<dbReference type="InterPro" id="IPR005712">
    <property type="entry name" value="Ribosomal_uS5_bac-type"/>
</dbReference>
<dbReference type="InterPro" id="IPR005324">
    <property type="entry name" value="Ribosomal_uS5_C"/>
</dbReference>
<dbReference type="InterPro" id="IPR013810">
    <property type="entry name" value="Ribosomal_uS5_N"/>
</dbReference>
<dbReference type="InterPro" id="IPR018192">
    <property type="entry name" value="Ribosomal_uS5_N_CS"/>
</dbReference>
<dbReference type="InterPro" id="IPR014721">
    <property type="entry name" value="Ribsml_uS5_D2-typ_fold_subgr"/>
</dbReference>
<dbReference type="NCBIfam" id="TIGR01021">
    <property type="entry name" value="rpsE_bact"/>
    <property type="match status" value="1"/>
</dbReference>
<dbReference type="PANTHER" id="PTHR48277">
    <property type="entry name" value="MITOCHONDRIAL RIBOSOMAL PROTEIN S5"/>
    <property type="match status" value="1"/>
</dbReference>
<dbReference type="PANTHER" id="PTHR48277:SF1">
    <property type="entry name" value="MITOCHONDRIAL RIBOSOMAL PROTEIN S5"/>
    <property type="match status" value="1"/>
</dbReference>
<dbReference type="Pfam" id="PF00333">
    <property type="entry name" value="Ribosomal_S5"/>
    <property type="match status" value="1"/>
</dbReference>
<dbReference type="Pfam" id="PF03719">
    <property type="entry name" value="Ribosomal_S5_C"/>
    <property type="match status" value="1"/>
</dbReference>
<dbReference type="SUPFAM" id="SSF54768">
    <property type="entry name" value="dsRNA-binding domain-like"/>
    <property type="match status" value="1"/>
</dbReference>
<dbReference type="SUPFAM" id="SSF54211">
    <property type="entry name" value="Ribosomal protein S5 domain 2-like"/>
    <property type="match status" value="1"/>
</dbReference>
<dbReference type="PROSITE" id="PS00585">
    <property type="entry name" value="RIBOSOMAL_S5"/>
    <property type="match status" value="1"/>
</dbReference>
<dbReference type="PROSITE" id="PS50881">
    <property type="entry name" value="S5_DSRBD"/>
    <property type="match status" value="1"/>
</dbReference>
<feature type="chain" id="PRO_0000131635" description="Small ribosomal subunit protein uS5">
    <location>
        <begin position="1"/>
        <end position="180"/>
    </location>
</feature>
<feature type="domain" description="S5 DRBM" evidence="1">
    <location>
        <begin position="24"/>
        <end position="87"/>
    </location>
</feature>
<keyword id="KW-0687">Ribonucleoprotein</keyword>
<keyword id="KW-0689">Ribosomal protein</keyword>
<keyword id="KW-0694">RNA-binding</keyword>
<keyword id="KW-0699">rRNA-binding</keyword>
<gene>
    <name evidence="1" type="primary">rpsE</name>
    <name type="ordered locus">XAC0989</name>
</gene>
<evidence type="ECO:0000255" key="1">
    <source>
        <dbReference type="HAMAP-Rule" id="MF_01307"/>
    </source>
</evidence>
<evidence type="ECO:0000305" key="2"/>
<reference key="1">
    <citation type="journal article" date="2002" name="Nature">
        <title>Comparison of the genomes of two Xanthomonas pathogens with differing host specificities.</title>
        <authorList>
            <person name="da Silva A.C.R."/>
            <person name="Ferro J.A."/>
            <person name="Reinach F.C."/>
            <person name="Farah C.S."/>
            <person name="Furlan L.R."/>
            <person name="Quaggio R.B."/>
            <person name="Monteiro-Vitorello C.B."/>
            <person name="Van Sluys M.A."/>
            <person name="Almeida N.F. Jr."/>
            <person name="Alves L.M.C."/>
            <person name="do Amaral A.M."/>
            <person name="Bertolini M.C."/>
            <person name="Camargo L.E.A."/>
            <person name="Camarotte G."/>
            <person name="Cannavan F."/>
            <person name="Cardozo J."/>
            <person name="Chambergo F."/>
            <person name="Ciapina L.P."/>
            <person name="Cicarelli R.M.B."/>
            <person name="Coutinho L.L."/>
            <person name="Cursino-Santos J.R."/>
            <person name="El-Dorry H."/>
            <person name="Faria J.B."/>
            <person name="Ferreira A.J.S."/>
            <person name="Ferreira R.C.C."/>
            <person name="Ferro M.I.T."/>
            <person name="Formighieri E.F."/>
            <person name="Franco M.C."/>
            <person name="Greggio C.C."/>
            <person name="Gruber A."/>
            <person name="Katsuyama A.M."/>
            <person name="Kishi L.T."/>
            <person name="Leite R.P."/>
            <person name="Lemos E.G.M."/>
            <person name="Lemos M.V.F."/>
            <person name="Locali E.C."/>
            <person name="Machado M.A."/>
            <person name="Madeira A.M.B.N."/>
            <person name="Martinez-Rossi N.M."/>
            <person name="Martins E.C."/>
            <person name="Meidanis J."/>
            <person name="Menck C.F.M."/>
            <person name="Miyaki C.Y."/>
            <person name="Moon D.H."/>
            <person name="Moreira L.M."/>
            <person name="Novo M.T.M."/>
            <person name="Okura V.K."/>
            <person name="Oliveira M.C."/>
            <person name="Oliveira V.R."/>
            <person name="Pereira H.A."/>
            <person name="Rossi A."/>
            <person name="Sena J.A.D."/>
            <person name="Silva C."/>
            <person name="de Souza R.F."/>
            <person name="Spinola L.A.F."/>
            <person name="Takita M.A."/>
            <person name="Tamura R.E."/>
            <person name="Teixeira E.C."/>
            <person name="Tezza R.I.D."/>
            <person name="Trindade dos Santos M."/>
            <person name="Truffi D."/>
            <person name="Tsai S.M."/>
            <person name="White F.F."/>
            <person name="Setubal J.C."/>
            <person name="Kitajima J.P."/>
        </authorList>
    </citation>
    <scope>NUCLEOTIDE SEQUENCE [LARGE SCALE GENOMIC DNA]</scope>
    <source>
        <strain>306</strain>
    </source>
</reference>
<organism>
    <name type="scientific">Xanthomonas axonopodis pv. citri (strain 306)</name>
    <dbReference type="NCBI Taxonomy" id="190486"/>
    <lineage>
        <taxon>Bacteria</taxon>
        <taxon>Pseudomonadati</taxon>
        <taxon>Pseudomonadota</taxon>
        <taxon>Gammaproteobacteria</taxon>
        <taxon>Lysobacterales</taxon>
        <taxon>Lysobacteraceae</taxon>
        <taxon>Xanthomonas</taxon>
    </lineage>
</organism>
<accession>P66586</accession>
<accession>Q8NL49</accession>